<organism>
    <name type="scientific">Thermus thermophilus (strain ATCC 27634 / DSM 579 / HB8)</name>
    <dbReference type="NCBI Taxonomy" id="300852"/>
    <lineage>
        <taxon>Bacteria</taxon>
        <taxon>Thermotogati</taxon>
        <taxon>Deinococcota</taxon>
        <taxon>Deinococci</taxon>
        <taxon>Thermales</taxon>
        <taxon>Thermaceae</taxon>
        <taxon>Thermus</taxon>
    </lineage>
</organism>
<dbReference type="EC" id="4.2.1.151" evidence="1"/>
<dbReference type="EMBL" id="AP008226">
    <property type="protein sequence ID" value="BAD70626.1"/>
    <property type="molecule type" value="Genomic_DNA"/>
</dbReference>
<dbReference type="RefSeq" id="WP_011228211.1">
    <property type="nucleotide sequence ID" value="NC_006461.1"/>
</dbReference>
<dbReference type="RefSeq" id="YP_144069.1">
    <property type="nucleotide sequence ID" value="NC_006461.1"/>
</dbReference>
<dbReference type="SMR" id="Q5SK49"/>
<dbReference type="EnsemblBacteria" id="BAD70626">
    <property type="protein sequence ID" value="BAD70626"/>
    <property type="gene ID" value="BAD70626"/>
</dbReference>
<dbReference type="GeneID" id="3170019"/>
<dbReference type="KEGG" id="ttj:TTHA0803"/>
<dbReference type="PATRIC" id="fig|300852.9.peg.797"/>
<dbReference type="eggNOG" id="COG1427">
    <property type="taxonomic scope" value="Bacteria"/>
</dbReference>
<dbReference type="HOGENOM" id="CLU_059898_0_0_0"/>
<dbReference type="PhylomeDB" id="Q5SK49"/>
<dbReference type="BRENDA" id="4.2.1.151">
    <property type="organism ID" value="2305"/>
</dbReference>
<dbReference type="UniPathway" id="UPA00079"/>
<dbReference type="Proteomes" id="UP000000532">
    <property type="component" value="Chromosome"/>
</dbReference>
<dbReference type="GO" id="GO:0016836">
    <property type="term" value="F:hydro-lyase activity"/>
    <property type="evidence" value="ECO:0007669"/>
    <property type="project" value="UniProtKB-UniRule"/>
</dbReference>
<dbReference type="GO" id="GO:0009234">
    <property type="term" value="P:menaquinone biosynthetic process"/>
    <property type="evidence" value="ECO:0007669"/>
    <property type="project" value="UniProtKB-UniRule"/>
</dbReference>
<dbReference type="CDD" id="cd13634">
    <property type="entry name" value="PBP2_Sco4506"/>
    <property type="match status" value="1"/>
</dbReference>
<dbReference type="Gene3D" id="3.40.190.10">
    <property type="entry name" value="Periplasmic binding protein-like II"/>
    <property type="match status" value="2"/>
</dbReference>
<dbReference type="HAMAP" id="MF_00995">
    <property type="entry name" value="MqnA"/>
    <property type="match status" value="1"/>
</dbReference>
<dbReference type="InterPro" id="IPR003773">
    <property type="entry name" value="Menaquinone_biosynth"/>
</dbReference>
<dbReference type="InterPro" id="IPR030868">
    <property type="entry name" value="MqnA"/>
</dbReference>
<dbReference type="PANTHER" id="PTHR37690">
    <property type="entry name" value="CHORISMATE DEHYDRATASE"/>
    <property type="match status" value="1"/>
</dbReference>
<dbReference type="PANTHER" id="PTHR37690:SF1">
    <property type="entry name" value="CHORISMATE DEHYDRATASE"/>
    <property type="match status" value="1"/>
</dbReference>
<dbReference type="Pfam" id="PF02621">
    <property type="entry name" value="VitK2_biosynth"/>
    <property type="match status" value="1"/>
</dbReference>
<dbReference type="SUPFAM" id="SSF53850">
    <property type="entry name" value="Periplasmic binding protein-like II"/>
    <property type="match status" value="1"/>
</dbReference>
<reference key="1">
    <citation type="submission" date="2004-11" db="EMBL/GenBank/DDBJ databases">
        <title>Complete genome sequence of Thermus thermophilus HB8.</title>
        <authorList>
            <person name="Masui R."/>
            <person name="Kurokawa K."/>
            <person name="Nakagawa N."/>
            <person name="Tokunaga F."/>
            <person name="Koyama Y."/>
            <person name="Shibata T."/>
            <person name="Oshima T."/>
            <person name="Yokoyama S."/>
            <person name="Yasunaga T."/>
            <person name="Kuramitsu S."/>
        </authorList>
    </citation>
    <scope>NUCLEOTIDE SEQUENCE [LARGE SCALE GENOMIC DNA]</scope>
    <source>
        <strain>ATCC 27634 / DSM 579 / HB8</strain>
    </source>
</reference>
<reference key="2">
    <citation type="journal article" date="2013" name="J. Am. Chem. Soc.">
        <title>Menaquinone biosynthesis: formation of aminofutalosine requires a unique radical SAM enzyme.</title>
        <authorList>
            <person name="Mahanta N."/>
            <person name="Fedoseyenko D."/>
            <person name="Dairi T."/>
            <person name="Begley T.P."/>
        </authorList>
    </citation>
    <scope>FUNCTION</scope>
    <scope>CATALYTIC ACTIVITY</scope>
    <scope>KINETIC PARAMETERS</scope>
    <scope>PATHWAY</scope>
    <source>
        <strain>ATCC 27634 / DSM 579 / HB8</strain>
    </source>
</reference>
<protein>
    <recommendedName>
        <fullName evidence="1">Chorismate dehydratase</fullName>
        <ecNumber evidence="1">4.2.1.151</ecNumber>
    </recommendedName>
    <alternativeName>
        <fullName evidence="1">Menaquinone biosynthetic enzyme MqnA</fullName>
    </alternativeName>
</protein>
<accession>Q5SK49</accession>
<keyword id="KW-0456">Lyase</keyword>
<keyword id="KW-0474">Menaquinone biosynthesis</keyword>
<keyword id="KW-1185">Reference proteome</keyword>
<gene>
    <name evidence="1" type="primary">mqnA</name>
    <name type="ordered locus">TTHA0803</name>
</gene>
<evidence type="ECO:0000255" key="1">
    <source>
        <dbReference type="HAMAP-Rule" id="MF_00995"/>
    </source>
</evidence>
<evidence type="ECO:0000269" key="2">
    <source>
    </source>
</evidence>
<sequence>MRPYVLGLPRYANVAPLHHFLRLEGFRVLHAVPAELNRLLLSGEVGLSLVSSYFYLKHQDSLGLLPDFSVAVLGRVYSVNLFHKGALPHLARVALTTESATSVALLKLLLKEAGAGPRYERREGGLELLSAYDGVLLIGDRAIKAYAALLPEVPETPHALPTRFGEVEVADLSTLWFQRTHLPFVFAVWAYRRENPPPKALVQALREARREGLGRLREVAEAEARRLGVHPLLLQHYLWNFRYHLEEPDRLGLKAFAEALGLPFAPMFYPE</sequence>
<feature type="chain" id="PRO_0000425123" description="Chorismate dehydratase">
    <location>
        <begin position="1"/>
        <end position="271"/>
    </location>
</feature>
<comment type="function">
    <text evidence="1 2">Catalyzes the dehydration of chorismate into 3-[(1-carboxyvinyl)oxy]benzoate, a step in the biosynthesis of menaquinone (MK, vitamin K2).</text>
</comment>
<comment type="catalytic activity">
    <reaction evidence="1 2">
        <text>chorismate = 3-[(1-carboxyvinyl)-oxy]benzoate + H2O</text>
        <dbReference type="Rhea" id="RHEA:40051"/>
        <dbReference type="ChEBI" id="CHEBI:15377"/>
        <dbReference type="ChEBI" id="CHEBI:29748"/>
        <dbReference type="ChEBI" id="CHEBI:76981"/>
        <dbReference type="EC" id="4.2.1.151"/>
    </reaction>
</comment>
<comment type="biophysicochemical properties">
    <kinetics>
        <KM evidence="2">161.6 uM for chorismate</KM>
        <text>kcat is 1.27 sec(-1).</text>
    </kinetics>
</comment>
<comment type="pathway">
    <text evidence="1 2">Quinol/quinone metabolism; menaquinone biosynthesis.</text>
</comment>
<comment type="similarity">
    <text evidence="1">Belongs to the MqnA/MqnD family. MqnA subfamily.</text>
</comment>
<name>MQNA_THET8</name>
<proteinExistence type="evidence at protein level"/>